<proteinExistence type="evidence at transcript level"/>
<sequence>MANINMADTVPSCDTYLLFNGETLLPIGVRAFIYTAVLAYCFIGLSAITGRFFKSMESIMRHSREVVTVDPHTNATIVKHEKVWNYTIADVALLAFGTSFPQISLATIDAIRNLGQLTAGGLGPGTLVGSAAFDLFPIHAVCVVMPRAGSKKKISDLGVWLVELFWSFWAYIWLYIILEVWTPRVITLWEALLTVLQYGLLLLHAYAQDKRWPYVSIPLARGERPEDWVPAEDASVDYDDNYDGIGDILPGQNEDIVDIFSAHSYSNEGYHHVSEEDVEESSTGLTLKNKWEDTHWFSIWWQQFVDAATLESSVSRKMDSTCLRVIGISWNLIIAPWKMLFAFVPPYEIAHGWIAFICSLIFISGIAYGVTKITDQISCVTGVSPYVIAFTALAAGTSWPDLVASKIAAERQITADSAITNITCSNSVNIYVGIGVPWLVDTMYNYFVYQKPLYIDNAAGLSFSLLVFFATSFGCITVLVLRRVILGAELGGPRMWAWATSVYFMILWVVFVVLSSLKISGVI</sequence>
<evidence type="ECO:0000250" key="1"/>
<evidence type="ECO:0000255" key="2"/>
<evidence type="ECO:0000305" key="3"/>
<dbReference type="EMBL" id="DP000010">
    <property type="protein sequence ID" value="ABA95194.1"/>
    <property type="molecule type" value="Genomic_DNA"/>
</dbReference>
<dbReference type="EMBL" id="DP000010">
    <property type="protein sequence ID" value="ABA95195.1"/>
    <property type="molecule type" value="Genomic_DNA"/>
</dbReference>
<dbReference type="EMBL" id="AP008217">
    <property type="protein sequence ID" value="BAF28765.1"/>
    <property type="molecule type" value="Genomic_DNA"/>
</dbReference>
<dbReference type="EMBL" id="AP014967">
    <property type="protein sequence ID" value="BAT15131.1"/>
    <property type="molecule type" value="Genomic_DNA"/>
</dbReference>
<dbReference type="EMBL" id="CM000148">
    <property type="protein sequence ID" value="EEE52517.1"/>
    <property type="status" value="ALT_INIT"/>
    <property type="molecule type" value="Genomic_DNA"/>
</dbReference>
<dbReference type="EMBL" id="AK066709">
    <property type="status" value="NOT_ANNOTATED_CDS"/>
    <property type="molecule type" value="mRNA"/>
</dbReference>
<dbReference type="RefSeq" id="XP_015618036.1">
    <property type="nucleotide sequence ID" value="XM_015762550.1"/>
</dbReference>
<dbReference type="FunCoup" id="Q2R041">
    <property type="interactions" value="1694"/>
</dbReference>
<dbReference type="STRING" id="39947.Q2R041"/>
<dbReference type="PaxDb" id="39947-Q2R041"/>
<dbReference type="EnsemblPlants" id="Os11t0660000-01">
    <molecule id="Q2R041-1"/>
    <property type="protein sequence ID" value="Os11t0660000-01"/>
    <property type="gene ID" value="Os11g0660000"/>
</dbReference>
<dbReference type="Gramene" id="Os11t0660000-01">
    <molecule id="Q2R041-1"/>
    <property type="protein sequence ID" value="Os11t0660000-01"/>
    <property type="gene ID" value="Os11g0660000"/>
</dbReference>
<dbReference type="KEGG" id="dosa:Os11g0660000"/>
<dbReference type="eggNOG" id="KOG1306">
    <property type="taxonomic scope" value="Eukaryota"/>
</dbReference>
<dbReference type="HOGENOM" id="CLU_012872_2_0_1"/>
<dbReference type="InParanoid" id="Q2R041"/>
<dbReference type="OMA" id="RLWAWIT"/>
<dbReference type="OrthoDB" id="2127281at2759"/>
<dbReference type="Proteomes" id="UP000000763">
    <property type="component" value="Chromosome 11"/>
</dbReference>
<dbReference type="Proteomes" id="UP000007752">
    <property type="component" value="Chromosome 11"/>
</dbReference>
<dbReference type="Proteomes" id="UP000059680">
    <property type="component" value="Chromosome 11"/>
</dbReference>
<dbReference type="GO" id="GO:0016020">
    <property type="term" value="C:membrane"/>
    <property type="evidence" value="ECO:0000318"/>
    <property type="project" value="GO_Central"/>
</dbReference>
<dbReference type="GO" id="GO:0005774">
    <property type="term" value="C:vacuolar membrane"/>
    <property type="evidence" value="ECO:0007669"/>
    <property type="project" value="UniProtKB-SubCell"/>
</dbReference>
<dbReference type="GO" id="GO:0030001">
    <property type="term" value="P:metal ion transport"/>
    <property type="evidence" value="ECO:0000318"/>
    <property type="project" value="GO_Central"/>
</dbReference>
<dbReference type="GO" id="GO:0055085">
    <property type="term" value="P:transmembrane transport"/>
    <property type="evidence" value="ECO:0007669"/>
    <property type="project" value="InterPro"/>
</dbReference>
<dbReference type="Gene3D" id="1.20.1420.30">
    <property type="entry name" value="NCX, central ion-binding region"/>
    <property type="match status" value="2"/>
</dbReference>
<dbReference type="InterPro" id="IPR051171">
    <property type="entry name" value="CaCA"/>
</dbReference>
<dbReference type="InterPro" id="IPR004837">
    <property type="entry name" value="NaCa_Exmemb"/>
</dbReference>
<dbReference type="InterPro" id="IPR044880">
    <property type="entry name" value="NCX_ion-bd_dom_sf"/>
</dbReference>
<dbReference type="PANTHER" id="PTHR11878:SF65">
    <property type="entry name" value="NA_CA-EXCHANGE PROTEIN, ISOFORM G"/>
    <property type="match status" value="1"/>
</dbReference>
<dbReference type="PANTHER" id="PTHR11878">
    <property type="entry name" value="SODIUM/CALCIUM EXCHANGER"/>
    <property type="match status" value="1"/>
</dbReference>
<dbReference type="Pfam" id="PF01699">
    <property type="entry name" value="Na_Ca_ex"/>
    <property type="match status" value="2"/>
</dbReference>
<reference key="1">
    <citation type="journal article" date="2005" name="BMC Biol.">
        <title>The sequence of rice chromosomes 11 and 12, rich in disease resistance genes and recent gene duplications.</title>
        <authorList>
            <consortium name="The rice chromosomes 11 and 12 sequencing consortia"/>
        </authorList>
    </citation>
    <scope>NUCLEOTIDE SEQUENCE [LARGE SCALE GENOMIC DNA]</scope>
    <source>
        <strain>cv. Nipponbare</strain>
    </source>
</reference>
<reference key="2">
    <citation type="journal article" date="2005" name="Nature">
        <title>The map-based sequence of the rice genome.</title>
        <authorList>
            <consortium name="International rice genome sequencing project (IRGSP)"/>
        </authorList>
    </citation>
    <scope>NUCLEOTIDE SEQUENCE [LARGE SCALE GENOMIC DNA]</scope>
    <source>
        <strain>cv. Nipponbare</strain>
    </source>
</reference>
<reference key="3">
    <citation type="journal article" date="2008" name="Nucleic Acids Res.">
        <title>The rice annotation project database (RAP-DB): 2008 update.</title>
        <authorList>
            <consortium name="The rice annotation project (RAP)"/>
        </authorList>
    </citation>
    <scope>GENOME REANNOTATION</scope>
    <source>
        <strain>cv. Nipponbare</strain>
    </source>
</reference>
<reference key="4">
    <citation type="journal article" date="2013" name="Rice">
        <title>Improvement of the Oryza sativa Nipponbare reference genome using next generation sequence and optical map data.</title>
        <authorList>
            <person name="Kawahara Y."/>
            <person name="de la Bastide M."/>
            <person name="Hamilton J.P."/>
            <person name="Kanamori H."/>
            <person name="McCombie W.R."/>
            <person name="Ouyang S."/>
            <person name="Schwartz D.C."/>
            <person name="Tanaka T."/>
            <person name="Wu J."/>
            <person name="Zhou S."/>
            <person name="Childs K.L."/>
            <person name="Davidson R.M."/>
            <person name="Lin H."/>
            <person name="Quesada-Ocampo L."/>
            <person name="Vaillancourt B."/>
            <person name="Sakai H."/>
            <person name="Lee S.S."/>
            <person name="Kim J."/>
            <person name="Numa H."/>
            <person name="Itoh T."/>
            <person name="Buell C.R."/>
            <person name="Matsumoto T."/>
        </authorList>
    </citation>
    <scope>GENOME REANNOTATION</scope>
    <source>
        <strain>cv. Nipponbare</strain>
    </source>
</reference>
<reference key="5">
    <citation type="journal article" date="2005" name="PLoS Biol.">
        <title>The genomes of Oryza sativa: a history of duplications.</title>
        <authorList>
            <person name="Yu J."/>
            <person name="Wang J."/>
            <person name="Lin W."/>
            <person name="Li S."/>
            <person name="Li H."/>
            <person name="Zhou J."/>
            <person name="Ni P."/>
            <person name="Dong W."/>
            <person name="Hu S."/>
            <person name="Zeng C."/>
            <person name="Zhang J."/>
            <person name="Zhang Y."/>
            <person name="Li R."/>
            <person name="Xu Z."/>
            <person name="Li S."/>
            <person name="Li X."/>
            <person name="Zheng H."/>
            <person name="Cong L."/>
            <person name="Lin L."/>
            <person name="Yin J."/>
            <person name="Geng J."/>
            <person name="Li G."/>
            <person name="Shi J."/>
            <person name="Liu J."/>
            <person name="Lv H."/>
            <person name="Li J."/>
            <person name="Wang J."/>
            <person name="Deng Y."/>
            <person name="Ran L."/>
            <person name="Shi X."/>
            <person name="Wang X."/>
            <person name="Wu Q."/>
            <person name="Li C."/>
            <person name="Ren X."/>
            <person name="Wang J."/>
            <person name="Wang X."/>
            <person name="Li D."/>
            <person name="Liu D."/>
            <person name="Zhang X."/>
            <person name="Ji Z."/>
            <person name="Zhao W."/>
            <person name="Sun Y."/>
            <person name="Zhang Z."/>
            <person name="Bao J."/>
            <person name="Han Y."/>
            <person name="Dong L."/>
            <person name="Ji J."/>
            <person name="Chen P."/>
            <person name="Wu S."/>
            <person name="Liu J."/>
            <person name="Xiao Y."/>
            <person name="Bu D."/>
            <person name="Tan J."/>
            <person name="Yang L."/>
            <person name="Ye C."/>
            <person name="Zhang J."/>
            <person name="Xu J."/>
            <person name="Zhou Y."/>
            <person name="Yu Y."/>
            <person name="Zhang B."/>
            <person name="Zhuang S."/>
            <person name="Wei H."/>
            <person name="Liu B."/>
            <person name="Lei M."/>
            <person name="Yu H."/>
            <person name="Li Y."/>
            <person name="Xu H."/>
            <person name="Wei S."/>
            <person name="He X."/>
            <person name="Fang L."/>
            <person name="Zhang Z."/>
            <person name="Zhang Y."/>
            <person name="Huang X."/>
            <person name="Su Z."/>
            <person name="Tong W."/>
            <person name="Li J."/>
            <person name="Tong Z."/>
            <person name="Li S."/>
            <person name="Ye J."/>
            <person name="Wang L."/>
            <person name="Fang L."/>
            <person name="Lei T."/>
            <person name="Chen C.-S."/>
            <person name="Chen H.-C."/>
            <person name="Xu Z."/>
            <person name="Li H."/>
            <person name="Huang H."/>
            <person name="Zhang F."/>
            <person name="Xu H."/>
            <person name="Li N."/>
            <person name="Zhao C."/>
            <person name="Li S."/>
            <person name="Dong L."/>
            <person name="Huang Y."/>
            <person name="Li L."/>
            <person name="Xi Y."/>
            <person name="Qi Q."/>
            <person name="Li W."/>
            <person name="Zhang B."/>
            <person name="Hu W."/>
            <person name="Zhang Y."/>
            <person name="Tian X."/>
            <person name="Jiao Y."/>
            <person name="Liang X."/>
            <person name="Jin J."/>
            <person name="Gao L."/>
            <person name="Zheng W."/>
            <person name="Hao B."/>
            <person name="Liu S.-M."/>
            <person name="Wang W."/>
            <person name="Yuan L."/>
            <person name="Cao M."/>
            <person name="McDermott J."/>
            <person name="Samudrala R."/>
            <person name="Wang J."/>
            <person name="Wong G.K.-S."/>
            <person name="Yang H."/>
        </authorList>
    </citation>
    <scope>NUCLEOTIDE SEQUENCE [LARGE SCALE GENOMIC DNA]</scope>
    <source>
        <strain>cv. Nipponbare</strain>
    </source>
</reference>
<reference key="6">
    <citation type="journal article" date="2003" name="Science">
        <title>Collection, mapping, and annotation of over 28,000 cDNA clones from japonica rice.</title>
        <authorList>
            <consortium name="The rice full-length cDNA consortium"/>
        </authorList>
    </citation>
    <scope>NUCLEOTIDE SEQUENCE [LARGE SCALE MRNA] (ISOFORM 1)</scope>
    <source>
        <strain>cv. Nipponbare</strain>
    </source>
</reference>
<name>MHX1_ORYSJ</name>
<keyword id="KW-0025">Alternative splicing</keyword>
<keyword id="KW-0406">Ion transport</keyword>
<keyword id="KW-0472">Membrane</keyword>
<keyword id="KW-1185">Reference proteome</keyword>
<keyword id="KW-0812">Transmembrane</keyword>
<keyword id="KW-1133">Transmembrane helix</keyword>
<keyword id="KW-0813">Transport</keyword>
<keyword id="KW-0926">Vacuole</keyword>
<organism>
    <name type="scientific">Oryza sativa subsp. japonica</name>
    <name type="common">Rice</name>
    <dbReference type="NCBI Taxonomy" id="39947"/>
    <lineage>
        <taxon>Eukaryota</taxon>
        <taxon>Viridiplantae</taxon>
        <taxon>Streptophyta</taxon>
        <taxon>Embryophyta</taxon>
        <taxon>Tracheophyta</taxon>
        <taxon>Spermatophyta</taxon>
        <taxon>Magnoliopsida</taxon>
        <taxon>Liliopsida</taxon>
        <taxon>Poales</taxon>
        <taxon>Poaceae</taxon>
        <taxon>BOP clade</taxon>
        <taxon>Oryzoideae</taxon>
        <taxon>Oryzeae</taxon>
        <taxon>Oryzinae</taxon>
        <taxon>Oryza</taxon>
        <taxon>Oryza sativa</taxon>
    </lineage>
</organism>
<gene>
    <name type="primary">MHX1</name>
    <name type="ordered locus">Os11g0660000</name>
    <name type="ordered locus">LOC_Os11g43860</name>
    <name type="ORF">OsJ_34726</name>
</gene>
<feature type="chain" id="PRO_0000416778" description="Magnesium/proton exchanger 1">
    <location>
        <begin position="1"/>
        <end position="523"/>
    </location>
</feature>
<feature type="transmembrane region" description="Helical" evidence="2">
    <location>
        <begin position="24"/>
        <end position="44"/>
    </location>
</feature>
<feature type="transmembrane region" description="Helical" evidence="2">
    <location>
        <begin position="88"/>
        <end position="108"/>
    </location>
</feature>
<feature type="transmembrane region" description="Helical" evidence="2">
    <location>
        <begin position="125"/>
        <end position="145"/>
    </location>
</feature>
<feature type="transmembrane region" description="Helical" evidence="2">
    <location>
        <begin position="157"/>
        <end position="177"/>
    </location>
</feature>
<feature type="transmembrane region" description="Helical" evidence="2">
    <location>
        <begin position="185"/>
        <end position="205"/>
    </location>
</feature>
<feature type="transmembrane region" description="Helical" evidence="2">
    <location>
        <begin position="325"/>
        <end position="345"/>
    </location>
</feature>
<feature type="transmembrane region" description="Helical" evidence="2">
    <location>
        <begin position="349"/>
        <end position="369"/>
    </location>
</feature>
<feature type="transmembrane region" description="Helical" evidence="2">
    <location>
        <begin position="377"/>
        <end position="397"/>
    </location>
</feature>
<feature type="transmembrane region" description="Helical" evidence="2">
    <location>
        <begin position="428"/>
        <end position="448"/>
    </location>
</feature>
<feature type="transmembrane region" description="Helical" evidence="2">
    <location>
        <begin position="461"/>
        <end position="481"/>
    </location>
</feature>
<feature type="transmembrane region" description="Helical" evidence="2">
    <location>
        <begin position="495"/>
        <end position="515"/>
    </location>
</feature>
<feature type="splice variant" id="VSP_042813" description="In isoform 2." evidence="3">
    <original>SNSVNIYVGI</original>
    <variation>RYISAHLLSN</variation>
    <location>
        <begin position="425"/>
        <end position="434"/>
    </location>
</feature>
<feature type="splice variant" id="VSP_042814" description="In isoform 2." evidence="3">
    <location>
        <begin position="435"/>
        <end position="523"/>
    </location>
</feature>
<feature type="sequence conflict" description="In Ref. 6; AK066709." evidence="3" ref="6">
    <original>E</original>
    <variation>K</variation>
    <location>
        <position position="232"/>
    </location>
</feature>
<accession>Q2R041</accession>
<accession>A0A0P0Y543</accession>
<accession>B9G8Q2</accession>
<accession>Q2R040</accession>
<protein>
    <recommendedName>
        <fullName>Magnesium/proton exchanger 1</fullName>
    </recommendedName>
    <alternativeName>
        <fullName>Mg(2+)/H(+) exchanger 1</fullName>
    </alternativeName>
    <alternativeName>
        <fullName>Zinc/proton exchanger 1</fullName>
    </alternativeName>
    <alternativeName>
        <fullName>Zn(2+)/H(+) exchanger 1</fullName>
    </alternativeName>
</protein>
<comment type="function">
    <text evidence="1">Vacuolar transporter that exchanges protons with Mg(2+), Zn(2+) and Fe(2+) ions. May control the partitioning of Mg(2+) and Zn(2+) between plant organs (By similarity).</text>
</comment>
<comment type="subcellular location">
    <subcellularLocation>
        <location evidence="1">Vacuole membrane</location>
        <topology evidence="1">Multi-pass membrane protein</topology>
    </subcellularLocation>
</comment>
<comment type="alternative products">
    <event type="alternative splicing"/>
    <isoform>
        <id>Q2R041-1</id>
        <name>1</name>
        <sequence type="displayed"/>
    </isoform>
    <isoform>
        <id>Q2R041-2</id>
        <name>2</name>
        <sequence type="described" ref="VSP_042813 VSP_042814"/>
    </isoform>
</comment>
<comment type="miscellaneous">
    <molecule>Isoform 2</molecule>
    <text evidence="3">May be due to an intron retention.</text>
</comment>
<comment type="similarity">
    <text evidence="3">Belongs to the Ca(2+):cation antiporter (CaCA) (TC 2.A.19) family. MHX subfamily.</text>
</comment>
<comment type="sequence caution" evidence="3">
    <conflict type="erroneous initiation">
        <sequence resource="EMBL-CDS" id="EEE52517"/>
    </conflict>
    <text>Truncated N-terminus.</text>
</comment>